<comment type="function">
    <text evidence="1 2">Phosphoinositide-3-kinase (PI3K) that phosphorylates PtdIns(4,5)P2 (Phosphatidylinositol 4,5-bisphosphate) to generate phosphatidylinositol 3,4,5-trisphosphate (PIP3). PIP3 plays a key role by recruiting PH domain-containing proteins to the membrane, including AKT1 and PDPK1, activating signaling cascades involved in cell growth, survival, proliferation, motility and morphology. Links G-protein coupled receptor activation to PIP3 production. Involved in immune, inflammatory and allergic responses. Modulates leukocyte chemotaxis to inflammatory sites and in response to chemoattractant agents. May control leukocyte polarization and migration by regulating the spatial accumulation of PIP3 and by regulating the organization of F-actin formation and integrin-based adhesion at the leading edge. Controls motility of dendritic cells. Participates in T-lymphocyte migration. Regulates T-lymphocyte proliferation and cytokine production. Required for B-lymphocyte development and signaling. Together with other PI3Ks are involved in the oxidative burst produced by neutrophils in response to chemotactic agents. Together with PIK3CD regulate neutrophil extravasation. Together with PIK3CB promotes platelet aggregation and thrombosis. Regulates alpha-IIb/beta-3 integrins (ITGA2B/ ITGB3) adhesive function in platelets downstream of P2Y12 through a lipid kinase activity-independent mechanism. May have also a lipid kinase activity-dependent function in platelet aggregation. Involved in endothelial progenitor cell migration. Negative regulator of cardiac contractility. Modulates cardiac contractility by anchoring protein kinase A (PKA) and PDE3B activation, reducing cAMP levels. Regulates cardiac contractility also by promoting beta-adrenergic receptor internalization by binding to GRK2 and by non-muscle tropomyosin phosphorylation. Also has serine/threonine protein kinase activity: both lipid and protein kinase activities are required for beta-adrenergic receptor endocytosis. May also have a scaffolding role in modulating cardiac contractility. Contribute to cardiac hypertrophy under pathological stress. Through simultaneous binding of PDE3B to RAPGEF3 and PIK3R6 is assembled in a signaling complex in which the PI3K gamma complex is activated by RAPGEF3 and which is involved in angiogenesis (By similarity). In neutrophils, participates in a phospholipase C-activating N-formyl peptide-activated GPCR (G protein-coupled receptor) signaling pathway downstream of RASGRP4-mediated Ras-activation, to promote neutrophil functional responses (By similarity).</text>
</comment>
<comment type="catalytic activity">
    <reaction evidence="1">
        <text>a 1,2-diacyl-sn-glycero-3-phospho-(1D-myo-inositol-4,5-bisphosphate) + ATP = a 1,2-diacyl-sn-glycero-3-phospho-(1D-myo-inositol-3,4,5-trisphosphate) + ADP + H(+)</text>
        <dbReference type="Rhea" id="RHEA:21292"/>
        <dbReference type="ChEBI" id="CHEBI:15378"/>
        <dbReference type="ChEBI" id="CHEBI:30616"/>
        <dbReference type="ChEBI" id="CHEBI:57836"/>
        <dbReference type="ChEBI" id="CHEBI:58456"/>
        <dbReference type="ChEBI" id="CHEBI:456216"/>
        <dbReference type="EC" id="2.7.1.153"/>
    </reaction>
    <physiologicalReaction direction="left-to-right" evidence="1">
        <dbReference type="Rhea" id="RHEA:21293"/>
    </physiologicalReaction>
</comment>
<comment type="catalytic activity">
    <reaction evidence="1">
        <text>a 1,2-diacyl-sn-glycero-3-phospho-(1D-myo-inositol) + ATP = a 1,2-diacyl-sn-glycero-3-phospho-(1D-myo-inositol-3-phosphate) + ADP + H(+)</text>
        <dbReference type="Rhea" id="RHEA:12709"/>
        <dbReference type="ChEBI" id="CHEBI:15378"/>
        <dbReference type="ChEBI" id="CHEBI:30616"/>
        <dbReference type="ChEBI" id="CHEBI:57880"/>
        <dbReference type="ChEBI" id="CHEBI:58088"/>
        <dbReference type="ChEBI" id="CHEBI:456216"/>
        <dbReference type="EC" id="2.7.1.137"/>
    </reaction>
    <physiologicalReaction direction="left-to-right" evidence="1">
        <dbReference type="Rhea" id="RHEA:12710"/>
    </physiologicalReaction>
</comment>
<comment type="catalytic activity">
    <reaction evidence="1">
        <text>a 1,2-diacyl-sn-glycero-3-phospho-(1D-myo-inositol 4-phosphate) + ATP = a 1,2-diacyl-sn-glycero-3-phospho-(1D-myo-inositol-3,4-bisphosphate) + ADP + H(+)</text>
        <dbReference type="Rhea" id="RHEA:18373"/>
        <dbReference type="ChEBI" id="CHEBI:15378"/>
        <dbReference type="ChEBI" id="CHEBI:30616"/>
        <dbReference type="ChEBI" id="CHEBI:57658"/>
        <dbReference type="ChEBI" id="CHEBI:58178"/>
        <dbReference type="ChEBI" id="CHEBI:456216"/>
        <dbReference type="EC" id="2.7.1.154"/>
    </reaction>
    <physiologicalReaction direction="left-to-right" evidence="1">
        <dbReference type="Rhea" id="RHEA:18374"/>
    </physiologicalReaction>
</comment>
<comment type="catalytic activity">
    <reaction evidence="1">
        <text>L-seryl-[protein] + ATP = O-phospho-L-seryl-[protein] + ADP + H(+)</text>
        <dbReference type="Rhea" id="RHEA:17989"/>
        <dbReference type="Rhea" id="RHEA-COMP:9863"/>
        <dbReference type="Rhea" id="RHEA-COMP:11604"/>
        <dbReference type="ChEBI" id="CHEBI:15378"/>
        <dbReference type="ChEBI" id="CHEBI:29999"/>
        <dbReference type="ChEBI" id="CHEBI:30616"/>
        <dbReference type="ChEBI" id="CHEBI:83421"/>
        <dbReference type="ChEBI" id="CHEBI:456216"/>
        <dbReference type="EC" id="2.7.11.1"/>
    </reaction>
    <physiologicalReaction direction="left-to-right" evidence="1">
        <dbReference type="Rhea" id="RHEA:17990"/>
    </physiologicalReaction>
</comment>
<comment type="activity regulation">
    <text>Activated by both the alpha and the beta-gamma G proteins following stimulation of G protein-coupled receptors (GPCRs). Activation by GPCRs is assisted by the regulatory subunits (PIK3R5 or PIK3R6) leading to the translocation from the cytosol to the plasma membrane and to kinase activation. When bound to PIK3R5 the PI3K activity of PIK3CG could be activated greater than 100-fold by the beta-gamma G proteins.</text>
</comment>
<comment type="pathway">
    <text>Phospholipid metabolism; phosphatidylinositol phosphate biosynthesis.</text>
</comment>
<comment type="subunit">
    <text evidence="1 2">Heterodimer of a catalytic subunit PIK3CG and a PIK3R5 or PIK3R6 regulatory subunit. Interacts with GRK2 through the PIK helical domain. Interaction with GRK2 is required for targeting to agonist-occupied receptor. Interacts with PDE3B; regulates PDE3B activity and thereby cAMP levels in cells. Interacts with TPM2. Interacts with EPHA8; regulates integrin-mediated cell adhesion to substrate. Interacts with HRAS; the interaction is required for membrane recruitment and beta-gamma G protein dimer-dependent activation of the PI3K gamma complex PIK3CG:PIK3R6 (By similarity).</text>
</comment>
<comment type="subcellular location">
    <subcellularLocation>
        <location evidence="1">Cytoplasm</location>
    </subcellularLocation>
    <subcellularLocation>
        <location evidence="1">Cell membrane</location>
    </subcellularLocation>
</comment>
<comment type="PTM">
    <text evidence="1">Autophosphorylation at Ser-1101 has no effect on the phosphatidylinositol-4,5-bisphosphate 3-kinase activity.</text>
</comment>
<comment type="similarity">
    <text evidence="4 6 7">Belongs to the PI3/PI4-kinase family.</text>
</comment>
<proteinExistence type="evidence at protein level"/>
<keyword id="KW-0002">3D-structure</keyword>
<keyword id="KW-0037">Angiogenesis</keyword>
<keyword id="KW-0067">ATP-binding</keyword>
<keyword id="KW-1003">Cell membrane</keyword>
<keyword id="KW-0145">Chemotaxis</keyword>
<keyword id="KW-0963">Cytoplasm</keyword>
<keyword id="KW-0903">Direct protein sequencing</keyword>
<keyword id="KW-0254">Endocytosis</keyword>
<keyword id="KW-0391">Immunity</keyword>
<keyword id="KW-0395">Inflammatory response</keyword>
<keyword id="KW-0418">Kinase</keyword>
<keyword id="KW-0443">Lipid metabolism</keyword>
<keyword id="KW-0472">Membrane</keyword>
<keyword id="KW-0547">Nucleotide-binding</keyword>
<keyword id="KW-0597">Phosphoprotein</keyword>
<keyword id="KW-1185">Reference proteome</keyword>
<keyword id="KW-0723">Serine/threonine-protein kinase</keyword>
<keyword id="KW-0808">Transferase</keyword>
<gene>
    <name type="primary">PIK3CG</name>
</gene>
<dbReference type="EC" id="2.7.1.137" evidence="1"/>
<dbReference type="EC" id="2.7.1.153" evidence="1"/>
<dbReference type="EC" id="2.7.1.154" evidence="1"/>
<dbReference type="EC" id="2.7.11.1" evidence="1"/>
<dbReference type="EMBL" id="Y10743">
    <property type="protein sequence ID" value="CAA71731.1"/>
    <property type="molecule type" value="mRNA"/>
</dbReference>
<dbReference type="RefSeq" id="NP_999104.1">
    <property type="nucleotide sequence ID" value="NM_213939.1"/>
</dbReference>
<dbReference type="PDB" id="1E7U">
    <property type="method" value="X-ray"/>
    <property type="resolution" value="2.00 A"/>
    <property type="chains" value="A=144-1102"/>
</dbReference>
<dbReference type="PDB" id="1E7V">
    <property type="method" value="X-ray"/>
    <property type="resolution" value="2.40 A"/>
    <property type="chains" value="A=144-1102"/>
</dbReference>
<dbReference type="PDB" id="1E8W">
    <property type="method" value="X-ray"/>
    <property type="resolution" value="2.50 A"/>
    <property type="chains" value="A=144-1102"/>
</dbReference>
<dbReference type="PDB" id="1E8X">
    <property type="method" value="X-ray"/>
    <property type="resolution" value="2.20 A"/>
    <property type="chains" value="A=144-1102"/>
</dbReference>
<dbReference type="PDB" id="1E90">
    <property type="method" value="X-ray"/>
    <property type="resolution" value="2.70 A"/>
    <property type="chains" value="A=144-1102"/>
</dbReference>
<dbReference type="PDB" id="8AJ8">
    <property type="method" value="X-ray"/>
    <property type="resolution" value="8.50 A"/>
    <property type="chains" value="A/C/E/G=1-1102"/>
</dbReference>
<dbReference type="PDB" id="8SO9">
    <property type="method" value="EM"/>
    <property type="resolution" value="3.03 A"/>
    <property type="chains" value="A=2-1102"/>
</dbReference>
<dbReference type="PDB" id="8SOA">
    <property type="method" value="EM"/>
    <property type="resolution" value="3.32 A"/>
    <property type="chains" value="A=2-1102"/>
</dbReference>
<dbReference type="PDB" id="8SOB">
    <property type="method" value="EM"/>
    <property type="resolution" value="3.90 A"/>
    <property type="chains" value="A=2-1102"/>
</dbReference>
<dbReference type="PDB" id="8SOC">
    <property type="method" value="EM"/>
    <property type="resolution" value="3.50 A"/>
    <property type="chains" value="A=2-1102"/>
</dbReference>
<dbReference type="PDB" id="8SOD">
    <property type="method" value="EM"/>
    <property type="resolution" value="3.40 A"/>
    <property type="chains" value="A=2-1102"/>
</dbReference>
<dbReference type="PDB" id="8SOE">
    <property type="method" value="EM"/>
    <property type="resolution" value="3.60 A"/>
    <property type="chains" value="A=2-1102"/>
</dbReference>
<dbReference type="PDBsum" id="1E7U"/>
<dbReference type="PDBsum" id="1E7V"/>
<dbReference type="PDBsum" id="1E8W"/>
<dbReference type="PDBsum" id="1E8X"/>
<dbReference type="PDBsum" id="1E90"/>
<dbReference type="PDBsum" id="8AJ8"/>
<dbReference type="PDBsum" id="8SO9"/>
<dbReference type="PDBsum" id="8SOA"/>
<dbReference type="PDBsum" id="8SOB"/>
<dbReference type="PDBsum" id="8SOC"/>
<dbReference type="PDBsum" id="8SOD"/>
<dbReference type="PDBsum" id="8SOE"/>
<dbReference type="SMR" id="O02697"/>
<dbReference type="FunCoup" id="O02697">
    <property type="interactions" value="203"/>
</dbReference>
<dbReference type="IntAct" id="O02697">
    <property type="interactions" value="2"/>
</dbReference>
<dbReference type="STRING" id="9823.ENSSSCP00000046980"/>
<dbReference type="GlyGen" id="O02697">
    <property type="glycosylation" value="1 site"/>
</dbReference>
<dbReference type="PaxDb" id="9823-ENSSSCP00000024176"/>
<dbReference type="GeneID" id="396979"/>
<dbReference type="KEGG" id="ssc:396979"/>
<dbReference type="CTD" id="5294"/>
<dbReference type="eggNOG" id="KOG0904">
    <property type="taxonomic scope" value="Eukaryota"/>
</dbReference>
<dbReference type="HOGENOM" id="CLU_145774_0_0_1"/>
<dbReference type="InParanoid" id="O02697"/>
<dbReference type="OrthoDB" id="67688at2759"/>
<dbReference type="BRENDA" id="2.7.1.137">
    <property type="organism ID" value="6170"/>
</dbReference>
<dbReference type="UniPathway" id="UPA00220"/>
<dbReference type="EvolutionaryTrace" id="O02697"/>
<dbReference type="Proteomes" id="UP000008227">
    <property type="component" value="Unplaced"/>
</dbReference>
<dbReference type="Proteomes" id="UP000314985">
    <property type="component" value="Unplaced"/>
</dbReference>
<dbReference type="Proteomes" id="UP000694570">
    <property type="component" value="Unplaced"/>
</dbReference>
<dbReference type="Proteomes" id="UP000694571">
    <property type="component" value="Unplaced"/>
</dbReference>
<dbReference type="Proteomes" id="UP000694720">
    <property type="component" value="Unplaced"/>
</dbReference>
<dbReference type="Proteomes" id="UP000694722">
    <property type="component" value="Unplaced"/>
</dbReference>
<dbReference type="Proteomes" id="UP000694723">
    <property type="component" value="Unplaced"/>
</dbReference>
<dbReference type="Proteomes" id="UP000694724">
    <property type="component" value="Unplaced"/>
</dbReference>
<dbReference type="Proteomes" id="UP000694725">
    <property type="component" value="Unplaced"/>
</dbReference>
<dbReference type="Proteomes" id="UP000694726">
    <property type="component" value="Unplaced"/>
</dbReference>
<dbReference type="Proteomes" id="UP000694727">
    <property type="component" value="Unplaced"/>
</dbReference>
<dbReference type="Proteomes" id="UP000694728">
    <property type="component" value="Unplaced"/>
</dbReference>
<dbReference type="GO" id="GO:0005737">
    <property type="term" value="C:cytoplasm"/>
    <property type="evidence" value="ECO:0000318"/>
    <property type="project" value="GO_Central"/>
</dbReference>
<dbReference type="GO" id="GO:0005943">
    <property type="term" value="C:phosphatidylinositol 3-kinase complex, class IA"/>
    <property type="evidence" value="ECO:0000318"/>
    <property type="project" value="GO_Central"/>
</dbReference>
<dbReference type="GO" id="GO:0005944">
    <property type="term" value="C:phosphatidylinositol 3-kinase complex, class IB"/>
    <property type="evidence" value="ECO:0000318"/>
    <property type="project" value="GO_Central"/>
</dbReference>
<dbReference type="GO" id="GO:0005886">
    <property type="term" value="C:plasma membrane"/>
    <property type="evidence" value="ECO:0000318"/>
    <property type="project" value="GO_Central"/>
</dbReference>
<dbReference type="GO" id="GO:0016303">
    <property type="term" value="F:1-phosphatidylinositol-3-kinase activity"/>
    <property type="evidence" value="ECO:0000250"/>
    <property type="project" value="UniProtKB"/>
</dbReference>
<dbReference type="GO" id="GO:0046934">
    <property type="term" value="F:1-phosphatidylinositol-4,5-bisphosphate 3-kinase activity"/>
    <property type="evidence" value="ECO:0000250"/>
    <property type="project" value="UniProtKB"/>
</dbReference>
<dbReference type="GO" id="GO:0035005">
    <property type="term" value="F:1-phosphatidylinositol-4-phosphate 3-kinase activity"/>
    <property type="evidence" value="ECO:0000250"/>
    <property type="project" value="UniProtKB"/>
</dbReference>
<dbReference type="GO" id="GO:0005524">
    <property type="term" value="F:ATP binding"/>
    <property type="evidence" value="ECO:0007669"/>
    <property type="project" value="UniProtKB-KW"/>
</dbReference>
<dbReference type="GO" id="GO:0106310">
    <property type="term" value="F:protein serine kinase activity"/>
    <property type="evidence" value="ECO:0000250"/>
    <property type="project" value="UniProtKB"/>
</dbReference>
<dbReference type="GO" id="GO:0004674">
    <property type="term" value="F:protein serine/threonine kinase activity"/>
    <property type="evidence" value="ECO:0007669"/>
    <property type="project" value="UniProtKB-KW"/>
</dbReference>
<dbReference type="GO" id="GO:0001525">
    <property type="term" value="P:angiogenesis"/>
    <property type="evidence" value="ECO:0007669"/>
    <property type="project" value="UniProtKB-KW"/>
</dbReference>
<dbReference type="GO" id="GO:0016477">
    <property type="term" value="P:cell migration"/>
    <property type="evidence" value="ECO:0000318"/>
    <property type="project" value="GO_Central"/>
</dbReference>
<dbReference type="GO" id="GO:0006935">
    <property type="term" value="P:chemotaxis"/>
    <property type="evidence" value="ECO:0007669"/>
    <property type="project" value="UniProtKB-KW"/>
</dbReference>
<dbReference type="GO" id="GO:0006897">
    <property type="term" value="P:endocytosis"/>
    <property type="evidence" value="ECO:0007669"/>
    <property type="project" value="UniProtKB-KW"/>
</dbReference>
<dbReference type="GO" id="GO:0002376">
    <property type="term" value="P:immune system process"/>
    <property type="evidence" value="ECO:0007669"/>
    <property type="project" value="UniProtKB-KW"/>
</dbReference>
<dbReference type="GO" id="GO:0006954">
    <property type="term" value="P:inflammatory response"/>
    <property type="evidence" value="ECO:0007669"/>
    <property type="project" value="UniProtKB-KW"/>
</dbReference>
<dbReference type="GO" id="GO:0043491">
    <property type="term" value="P:phosphatidylinositol 3-kinase/protein kinase B signal transduction"/>
    <property type="evidence" value="ECO:0000318"/>
    <property type="project" value="GO_Central"/>
</dbReference>
<dbReference type="GO" id="GO:0046854">
    <property type="term" value="P:phosphatidylinositol phosphate biosynthetic process"/>
    <property type="evidence" value="ECO:0000250"/>
    <property type="project" value="UniProtKB"/>
</dbReference>
<dbReference type="GO" id="GO:0036092">
    <property type="term" value="P:phosphatidylinositol-3-phosphate biosynthetic process"/>
    <property type="evidence" value="ECO:0000318"/>
    <property type="project" value="GO_Central"/>
</dbReference>
<dbReference type="GO" id="GO:0048015">
    <property type="term" value="P:phosphatidylinositol-mediated signaling"/>
    <property type="evidence" value="ECO:0000318"/>
    <property type="project" value="GO_Central"/>
</dbReference>
<dbReference type="GO" id="GO:0007200">
    <property type="term" value="P:phospholipase C-activating G protein-coupled receptor signaling pathway"/>
    <property type="evidence" value="ECO:0000250"/>
    <property type="project" value="UniProtKB"/>
</dbReference>
<dbReference type="CDD" id="cd08399">
    <property type="entry name" value="C2_PI3K_class_I_gamma"/>
    <property type="match status" value="1"/>
</dbReference>
<dbReference type="CDD" id="cd00872">
    <property type="entry name" value="PI3Ka_I"/>
    <property type="match status" value="1"/>
</dbReference>
<dbReference type="CDD" id="cd00894">
    <property type="entry name" value="PI3Kc_IB_gamma"/>
    <property type="match status" value="1"/>
</dbReference>
<dbReference type="FunFam" id="3.30.1010.10:FF:000008">
    <property type="entry name" value="Phosphatidylinositol 4,5-bisphosphate 3-kinase catalytic subunit gamma"/>
    <property type="match status" value="1"/>
</dbReference>
<dbReference type="FunFam" id="1.10.1070.11:FF:000010">
    <property type="entry name" value="Phosphatidylinositol 4,5-bisphosphate 3-kinase catalytic subunit gamma isoform"/>
    <property type="match status" value="1"/>
</dbReference>
<dbReference type="FunFam" id="1.25.40.70:FF:000006">
    <property type="entry name" value="Phosphatidylinositol 4,5-bisphosphate 3-kinase catalytic subunit gamma isoform"/>
    <property type="match status" value="1"/>
</dbReference>
<dbReference type="FunFam" id="2.60.40.150:FF:000087">
    <property type="entry name" value="Phosphatidylinositol 4,5-bisphosphate 3-kinase catalytic subunit gamma isoform"/>
    <property type="match status" value="1"/>
</dbReference>
<dbReference type="FunFam" id="3.10.20.770:FF:000001">
    <property type="entry name" value="Phosphatidylinositol 4,5-bisphosphate 3-kinase catalytic subunit gamma isoform"/>
    <property type="match status" value="1"/>
</dbReference>
<dbReference type="Gene3D" id="3.10.20.770">
    <property type="match status" value="1"/>
</dbReference>
<dbReference type="Gene3D" id="2.60.40.150">
    <property type="entry name" value="C2 domain"/>
    <property type="match status" value="1"/>
</dbReference>
<dbReference type="Gene3D" id="1.10.1070.11">
    <property type="entry name" value="Phosphatidylinositol 3-/4-kinase, catalytic domain"/>
    <property type="match status" value="1"/>
</dbReference>
<dbReference type="Gene3D" id="3.30.1010.10">
    <property type="entry name" value="Phosphatidylinositol 3-kinase Catalytic Subunit, Chain A, domain 4"/>
    <property type="match status" value="1"/>
</dbReference>
<dbReference type="Gene3D" id="1.25.40.70">
    <property type="entry name" value="Phosphatidylinositol 3-kinase, accessory domain (PIK)"/>
    <property type="match status" value="1"/>
</dbReference>
<dbReference type="InterPro" id="IPR016024">
    <property type="entry name" value="ARM-type_fold"/>
</dbReference>
<dbReference type="InterPro" id="IPR035892">
    <property type="entry name" value="C2_domain_sf"/>
</dbReference>
<dbReference type="InterPro" id="IPR011009">
    <property type="entry name" value="Kinase-like_dom_sf"/>
</dbReference>
<dbReference type="InterPro" id="IPR000403">
    <property type="entry name" value="PI3/4_kinase_cat_dom"/>
</dbReference>
<dbReference type="InterPro" id="IPR036940">
    <property type="entry name" value="PI3/4_kinase_cat_sf"/>
</dbReference>
<dbReference type="InterPro" id="IPR018936">
    <property type="entry name" value="PI3/4_kinase_CS"/>
</dbReference>
<dbReference type="InterPro" id="IPR002420">
    <property type="entry name" value="PI3K-type_C2_dom"/>
</dbReference>
<dbReference type="InterPro" id="IPR003113">
    <property type="entry name" value="PI3K_ABD"/>
</dbReference>
<dbReference type="InterPro" id="IPR001263">
    <property type="entry name" value="PI3K_accessory_dom"/>
</dbReference>
<dbReference type="InterPro" id="IPR042236">
    <property type="entry name" value="PI3K_accessory_sf"/>
</dbReference>
<dbReference type="InterPro" id="IPR000341">
    <property type="entry name" value="PI3K_Ras-bd_dom"/>
</dbReference>
<dbReference type="InterPro" id="IPR015433">
    <property type="entry name" value="PI_Kinase"/>
</dbReference>
<dbReference type="InterPro" id="IPR045580">
    <property type="entry name" value="PIK3CG_ABD"/>
</dbReference>
<dbReference type="InterPro" id="IPR029071">
    <property type="entry name" value="Ubiquitin-like_domsf"/>
</dbReference>
<dbReference type="PANTHER" id="PTHR10048:SF34">
    <property type="entry name" value="PHOSPHATIDYLINOSITOL 4,5-BISPHOSPHATE 3-KINASE CATALYTIC SUBUNIT GAMMA ISOFORM"/>
    <property type="match status" value="1"/>
</dbReference>
<dbReference type="PANTHER" id="PTHR10048">
    <property type="entry name" value="PHOSPHATIDYLINOSITOL KINASE"/>
    <property type="match status" value="1"/>
</dbReference>
<dbReference type="Pfam" id="PF00454">
    <property type="entry name" value="PI3_PI4_kinase"/>
    <property type="match status" value="1"/>
</dbReference>
<dbReference type="Pfam" id="PF00792">
    <property type="entry name" value="PI3K_C2"/>
    <property type="match status" value="1"/>
</dbReference>
<dbReference type="Pfam" id="PF00794">
    <property type="entry name" value="PI3K_rbd"/>
    <property type="match status" value="1"/>
</dbReference>
<dbReference type="Pfam" id="PF00613">
    <property type="entry name" value="PI3Ka"/>
    <property type="match status" value="1"/>
</dbReference>
<dbReference type="Pfam" id="PF19710">
    <property type="entry name" value="PIK3CG_ABD"/>
    <property type="match status" value="1"/>
</dbReference>
<dbReference type="SMART" id="SM00142">
    <property type="entry name" value="PI3K_C2"/>
    <property type="match status" value="1"/>
</dbReference>
<dbReference type="SMART" id="SM00144">
    <property type="entry name" value="PI3K_rbd"/>
    <property type="match status" value="1"/>
</dbReference>
<dbReference type="SMART" id="SM00145">
    <property type="entry name" value="PI3Ka"/>
    <property type="match status" value="1"/>
</dbReference>
<dbReference type="SMART" id="SM00146">
    <property type="entry name" value="PI3Kc"/>
    <property type="match status" value="1"/>
</dbReference>
<dbReference type="SUPFAM" id="SSF48371">
    <property type="entry name" value="ARM repeat"/>
    <property type="match status" value="1"/>
</dbReference>
<dbReference type="SUPFAM" id="SSF49562">
    <property type="entry name" value="C2 domain (Calcium/lipid-binding domain, CaLB)"/>
    <property type="match status" value="1"/>
</dbReference>
<dbReference type="SUPFAM" id="SSF56112">
    <property type="entry name" value="Protein kinase-like (PK-like)"/>
    <property type="match status" value="1"/>
</dbReference>
<dbReference type="SUPFAM" id="SSF54236">
    <property type="entry name" value="Ubiquitin-like"/>
    <property type="match status" value="1"/>
</dbReference>
<dbReference type="PROSITE" id="PS51547">
    <property type="entry name" value="C2_PI3K"/>
    <property type="match status" value="1"/>
</dbReference>
<dbReference type="PROSITE" id="PS00915">
    <property type="entry name" value="PI3_4_KINASE_1"/>
    <property type="match status" value="1"/>
</dbReference>
<dbReference type="PROSITE" id="PS00916">
    <property type="entry name" value="PI3_4_KINASE_2"/>
    <property type="match status" value="1"/>
</dbReference>
<dbReference type="PROSITE" id="PS50290">
    <property type="entry name" value="PI3_4_KINASE_3"/>
    <property type="match status" value="1"/>
</dbReference>
<dbReference type="PROSITE" id="PS51544">
    <property type="entry name" value="PI3K_ABD"/>
    <property type="match status" value="1"/>
</dbReference>
<dbReference type="PROSITE" id="PS51546">
    <property type="entry name" value="PI3K_RBD"/>
    <property type="match status" value="1"/>
</dbReference>
<dbReference type="PROSITE" id="PS51545">
    <property type="entry name" value="PIK_HELICAL"/>
    <property type="match status" value="1"/>
</dbReference>
<organism>
    <name type="scientific">Sus scrofa</name>
    <name type="common">Pig</name>
    <dbReference type="NCBI Taxonomy" id="9823"/>
    <lineage>
        <taxon>Eukaryota</taxon>
        <taxon>Metazoa</taxon>
        <taxon>Chordata</taxon>
        <taxon>Craniata</taxon>
        <taxon>Vertebrata</taxon>
        <taxon>Euteleostomi</taxon>
        <taxon>Mammalia</taxon>
        <taxon>Eutheria</taxon>
        <taxon>Laurasiatheria</taxon>
        <taxon>Artiodactyla</taxon>
        <taxon>Suina</taxon>
        <taxon>Suidae</taxon>
        <taxon>Sus</taxon>
    </lineage>
</organism>
<accession>O02697</accession>
<name>PK3CG_PIG</name>
<protein>
    <recommendedName>
        <fullName>Phosphatidylinositol 4,5-bisphosphate 3-kinase catalytic subunit gamma isoform</fullName>
        <shortName>PI3-kinase subunit gamma</shortName>
        <shortName>PI3K-gamma</shortName>
        <shortName>PI3Kgamma</shortName>
        <shortName>PtdIns-3-kinase subunit gamma</shortName>
        <ecNumber evidence="1">2.7.1.137</ecNumber>
        <ecNumber evidence="1">2.7.1.153</ecNumber>
        <ecNumber evidence="1">2.7.1.154</ecNumber>
    </recommendedName>
    <alternativeName>
        <fullName>Phosphatidylinositol 4,5-bisphosphate 3-kinase 110 kDa catalytic subunit gamma</fullName>
        <shortName>PtdIns-3-kinase subunit p110-gamma</shortName>
        <shortName>p110gamma</shortName>
    </alternativeName>
    <alternativeName>
        <fullName>Phosphoinositide-3-kinase catalytic gamma polypeptide</fullName>
    </alternativeName>
    <alternativeName>
        <fullName evidence="1">Serine/threonine protein kinase PIK3CG</fullName>
        <ecNumber evidence="1">2.7.11.1</ecNumber>
    </alternativeName>
    <alternativeName>
        <fullName>p120-PI3K</fullName>
    </alternativeName>
</protein>
<reference key="1">
    <citation type="journal article" date="1997" name="Cell">
        <title>The G beta gamma sensitivity of a PI3K is dependent upon a tightly associated adaptor, p101.</title>
        <authorList>
            <person name="Stephens L.R."/>
            <person name="Eguinoa A."/>
            <person name="Erdjument-Bromage H."/>
            <person name="Lui M."/>
            <person name="Cooke F."/>
            <person name="Coadwell J."/>
            <person name="Smrcka A.S."/>
            <person name="Thelen M."/>
            <person name="Cadwallader K."/>
            <person name="Tempst P."/>
            <person name="Hawkins P.T."/>
        </authorList>
    </citation>
    <scope>NUCLEOTIDE SEQUENCE [MRNA]</scope>
    <scope>PARTIAL PROTEIN SEQUENCE</scope>
    <scope>INTERACTION WITH PIK3R5</scope>
    <source>
        <tissue>Neutrophil</tissue>
    </source>
</reference>
<reference key="2">
    <citation type="submission" date="1998-04" db="EMBL/GenBank/DDBJ databases">
        <authorList>
            <person name="Stephens L.R."/>
        </authorList>
    </citation>
    <scope>SEQUENCE REVISION</scope>
</reference>
<reference key="3">
    <citation type="journal article" date="2000" name="Mol. Cell">
        <title>Structural determinants of phosphoinositide 3-kinase inhibition by wortmannin, LY294002, quercetin, myricetin, and staurosporine.</title>
        <authorList>
            <person name="Walker E.H."/>
            <person name="Pacold M.E."/>
            <person name="Perisic O."/>
            <person name="Stephens L."/>
            <person name="Hawkins P.T."/>
            <person name="Wymann M.P."/>
            <person name="Williams R.L."/>
        </authorList>
    </citation>
    <scope>X-RAY CRYSTALLOGRAPHY (2.0 ANGSTROMS) OF 144-1102 IN COMPLEX WITH ATP AND INHIBITORS</scope>
</reference>
<feature type="chain" id="PRO_0000088794" description="Phosphatidylinositol 4,5-bisphosphate 3-kinase catalytic subunit gamma isoform">
    <location>
        <begin position="1"/>
        <end position="1102"/>
    </location>
</feature>
<feature type="domain" description="PI3K-ABD" evidence="4">
    <location>
        <begin position="34"/>
        <end position="141"/>
    </location>
</feature>
<feature type="domain" description="PI3K-RBD" evidence="6">
    <location>
        <begin position="217"/>
        <end position="309"/>
    </location>
</feature>
<feature type="domain" description="C2 PI3K-type" evidence="7">
    <location>
        <begin position="357"/>
        <end position="521"/>
    </location>
</feature>
<feature type="domain" description="PIK helical" evidence="5">
    <location>
        <begin position="541"/>
        <end position="723"/>
    </location>
</feature>
<feature type="domain" description="PI3K/PI4K catalytic" evidence="3">
    <location>
        <begin position="797"/>
        <end position="1080"/>
    </location>
</feature>
<feature type="region of interest" description="G-loop" evidence="3">
    <location>
        <begin position="803"/>
        <end position="809"/>
    </location>
</feature>
<feature type="region of interest" description="Catalytic loop" evidence="3">
    <location>
        <begin position="943"/>
        <end position="951"/>
    </location>
</feature>
<feature type="region of interest" description="Activation loop" evidence="3">
    <location>
        <begin position="962"/>
        <end position="988"/>
    </location>
</feature>
<feature type="binding site" evidence="8">
    <location>
        <begin position="829"/>
        <end position="838"/>
    </location>
    <ligand>
        <name>ATP</name>
        <dbReference type="ChEBI" id="CHEBI:30616"/>
    </ligand>
</feature>
<feature type="binding site" evidence="8">
    <location>
        <begin position="864"/>
        <end position="872"/>
    </location>
    <ligand>
        <name>ATP</name>
        <dbReference type="ChEBI" id="CHEBI:30616"/>
    </ligand>
</feature>
<feature type="binding site" evidence="8">
    <location>
        <begin position="961"/>
        <end position="969"/>
    </location>
    <ligand>
        <name>ATP</name>
        <dbReference type="ChEBI" id="CHEBI:30616"/>
    </ligand>
</feature>
<feature type="modified residue" description="Phosphothreonine; by PKA" evidence="2">
    <location>
        <position position="1024"/>
    </location>
</feature>
<feature type="modified residue" description="Phosphoserine; by autocatalysis" evidence="1">
    <location>
        <position position="1101"/>
    </location>
</feature>
<feature type="strand" evidence="12">
    <location>
        <begin position="38"/>
        <end position="43"/>
    </location>
</feature>
<feature type="strand" evidence="12">
    <location>
        <begin position="56"/>
        <end position="61"/>
    </location>
</feature>
<feature type="helix" evidence="12">
    <location>
        <begin position="67"/>
        <end position="81"/>
    </location>
</feature>
<feature type="helix" evidence="12">
    <location>
        <begin position="86"/>
        <end position="90"/>
    </location>
</feature>
<feature type="helix" evidence="12">
    <location>
        <begin position="93"/>
        <end position="95"/>
    </location>
</feature>
<feature type="strand" evidence="12">
    <location>
        <begin position="96"/>
        <end position="108"/>
    </location>
</feature>
<feature type="strand" evidence="12">
    <location>
        <begin position="112"/>
        <end position="115"/>
    </location>
</feature>
<feature type="helix" evidence="12">
    <location>
        <begin position="116"/>
        <end position="118"/>
    </location>
</feature>
<feature type="helix" evidence="12">
    <location>
        <begin position="120"/>
        <end position="128"/>
    </location>
</feature>
<feature type="strand" evidence="12">
    <location>
        <begin position="131"/>
        <end position="139"/>
    </location>
</feature>
<feature type="helix" evidence="9">
    <location>
        <begin position="145"/>
        <end position="158"/>
    </location>
</feature>
<feature type="strand" evidence="9">
    <location>
        <begin position="169"/>
        <end position="171"/>
    </location>
</feature>
<feature type="helix" evidence="9">
    <location>
        <begin position="172"/>
        <end position="190"/>
    </location>
</feature>
<feature type="helix" evidence="9">
    <location>
        <begin position="193"/>
        <end position="198"/>
    </location>
</feature>
<feature type="helix" evidence="9">
    <location>
        <begin position="209"/>
        <end position="212"/>
    </location>
</feature>
<feature type="helix" evidence="11">
    <location>
        <begin position="213"/>
        <end position="215"/>
    </location>
</feature>
<feature type="strand" evidence="9">
    <location>
        <begin position="216"/>
        <end position="228"/>
    </location>
</feature>
<feature type="strand" evidence="9">
    <location>
        <begin position="230"/>
        <end position="236"/>
    </location>
</feature>
<feature type="helix" evidence="9">
    <location>
        <begin position="241"/>
        <end position="251"/>
    </location>
</feature>
<feature type="helix" evidence="12">
    <location>
        <begin position="253"/>
        <end position="255"/>
    </location>
</feature>
<feature type="helix" evidence="12">
    <location>
        <begin position="256"/>
        <end position="259"/>
    </location>
</feature>
<feature type="strand" evidence="13">
    <location>
        <begin position="263"/>
        <end position="265"/>
    </location>
</feature>
<feature type="helix" evidence="14">
    <location>
        <begin position="267"/>
        <end position="269"/>
    </location>
</feature>
<feature type="strand" evidence="9">
    <location>
        <begin position="271"/>
        <end position="274"/>
    </location>
</feature>
<feature type="strand" evidence="9">
    <location>
        <begin position="283"/>
        <end position="285"/>
    </location>
</feature>
<feature type="helix" evidence="9">
    <location>
        <begin position="287"/>
        <end position="289"/>
    </location>
</feature>
<feature type="helix" evidence="9">
    <location>
        <begin position="291"/>
        <end position="299"/>
    </location>
</feature>
<feature type="strand" evidence="9">
    <location>
        <begin position="303"/>
        <end position="308"/>
    </location>
</feature>
<feature type="helix" evidence="9">
    <location>
        <begin position="313"/>
        <end position="316"/>
    </location>
</feature>
<feature type="strand" evidence="12">
    <location>
        <begin position="328"/>
        <end position="331"/>
    </location>
</feature>
<feature type="helix" evidence="12">
    <location>
        <begin position="336"/>
        <end position="339"/>
    </location>
</feature>
<feature type="helix" evidence="12">
    <location>
        <begin position="346"/>
        <end position="348"/>
    </location>
</feature>
<feature type="helix" evidence="12">
    <location>
        <begin position="354"/>
        <end position="356"/>
    </location>
</feature>
<feature type="strand" evidence="9">
    <location>
        <begin position="359"/>
        <end position="369"/>
    </location>
</feature>
<feature type="strand" evidence="9">
    <location>
        <begin position="379"/>
        <end position="389"/>
    </location>
</feature>
<feature type="strand" evidence="9">
    <location>
        <begin position="392"/>
        <end position="398"/>
    </location>
</feature>
<feature type="strand" evidence="9">
    <location>
        <begin position="406"/>
        <end position="419"/>
    </location>
</feature>
<feature type="helix" evidence="9">
    <location>
        <begin position="420"/>
        <end position="422"/>
    </location>
</feature>
<feature type="strand" evidence="9">
    <location>
        <begin position="428"/>
        <end position="437"/>
    </location>
</feature>
<feature type="strand" evidence="9">
    <location>
        <begin position="460"/>
        <end position="469"/>
    </location>
</feature>
<feature type="strand" evidence="9">
    <location>
        <begin position="473"/>
        <end position="475"/>
    </location>
</feature>
<feature type="strand" evidence="9">
    <location>
        <begin position="478"/>
        <end position="483"/>
    </location>
</feature>
<feature type="helix" evidence="9">
    <location>
        <begin position="499"/>
        <end position="502"/>
    </location>
</feature>
<feature type="turn" evidence="9">
    <location>
        <begin position="510"/>
        <end position="512"/>
    </location>
</feature>
<feature type="strand" evidence="9">
    <location>
        <begin position="515"/>
        <end position="520"/>
    </location>
</feature>
<feature type="helix" evidence="15">
    <location>
        <begin position="538"/>
        <end position="541"/>
    </location>
</feature>
<feature type="helix" evidence="9">
    <location>
        <begin position="549"/>
        <end position="559"/>
    </location>
</feature>
<feature type="strand" evidence="10">
    <location>
        <begin position="563"/>
        <end position="565"/>
    </location>
</feature>
<feature type="helix" evidence="9">
    <location>
        <begin position="569"/>
        <end position="577"/>
    </location>
</feature>
<feature type="helix" evidence="9">
    <location>
        <begin position="579"/>
        <end position="582"/>
    </location>
</feature>
<feature type="helix" evidence="9">
    <location>
        <begin position="586"/>
        <end position="588"/>
    </location>
</feature>
<feature type="helix" evidence="9">
    <location>
        <begin position="589"/>
        <end position="593"/>
    </location>
</feature>
<feature type="strand" evidence="12">
    <location>
        <begin position="594"/>
        <end position="596"/>
    </location>
</feature>
<feature type="helix" evidence="9">
    <location>
        <begin position="601"/>
        <end position="612"/>
    </location>
</feature>
<feature type="helix" evidence="9">
    <location>
        <begin position="615"/>
        <end position="619"/>
    </location>
</feature>
<feature type="helix" evidence="9">
    <location>
        <begin position="624"/>
        <end position="629"/>
    </location>
</feature>
<feature type="strand" evidence="12">
    <location>
        <begin position="630"/>
        <end position="632"/>
    </location>
</feature>
<feature type="helix" evidence="9">
    <location>
        <begin position="638"/>
        <end position="648"/>
    </location>
</feature>
<feature type="helix" evidence="9">
    <location>
        <begin position="653"/>
        <end position="666"/>
    </location>
</feature>
<feature type="helix" evidence="9">
    <location>
        <begin position="667"/>
        <end position="669"/>
    </location>
</feature>
<feature type="strand" evidence="9">
    <location>
        <begin position="671"/>
        <end position="674"/>
    </location>
</feature>
<feature type="helix" evidence="9">
    <location>
        <begin position="676"/>
        <end position="687"/>
    </location>
</feature>
<feature type="helix" evidence="9">
    <location>
        <begin position="689"/>
        <end position="705"/>
    </location>
</feature>
<feature type="turn" evidence="9">
    <location>
        <begin position="707"/>
        <end position="709"/>
    </location>
</feature>
<feature type="helix" evidence="9">
    <location>
        <begin position="710"/>
        <end position="721"/>
    </location>
</feature>
<feature type="helix" evidence="9">
    <location>
        <begin position="726"/>
        <end position="748"/>
    </location>
</feature>
<feature type="helix" evidence="9">
    <location>
        <begin position="750"/>
        <end position="753"/>
    </location>
</feature>
<feature type="strand" evidence="11">
    <location>
        <begin position="754"/>
        <end position="756"/>
    </location>
</feature>
<feature type="helix" evidence="9">
    <location>
        <begin position="761"/>
        <end position="776"/>
    </location>
</feature>
<feature type="strand" evidence="9">
    <location>
        <begin position="783"/>
        <end position="785"/>
    </location>
</feature>
<feature type="strand" evidence="9">
    <location>
        <begin position="788"/>
        <end position="796"/>
    </location>
</feature>
<feature type="helix" evidence="9">
    <location>
        <begin position="798"/>
        <end position="800"/>
    </location>
</feature>
<feature type="strand" evidence="10">
    <location>
        <begin position="805"/>
        <end position="808"/>
    </location>
</feature>
<feature type="strand" evidence="9">
    <location>
        <begin position="811"/>
        <end position="818"/>
    </location>
</feature>
<feature type="strand" evidence="9">
    <location>
        <begin position="828"/>
        <end position="836"/>
    </location>
</feature>
<feature type="helix" evidence="9">
    <location>
        <begin position="839"/>
        <end position="857"/>
    </location>
</feature>
<feature type="strand" evidence="9">
    <location>
        <begin position="869"/>
        <end position="873"/>
    </location>
</feature>
<feature type="strand" evidence="9">
    <location>
        <begin position="876"/>
        <end position="880"/>
    </location>
</feature>
<feature type="strand" evidence="9">
    <location>
        <begin position="883"/>
        <end position="887"/>
    </location>
</feature>
<feature type="helix" evidence="9">
    <location>
        <begin position="888"/>
        <end position="895"/>
    </location>
</feature>
<feature type="strand" evidence="9">
    <location>
        <begin position="898"/>
        <end position="900"/>
    </location>
</feature>
<feature type="helix" evidence="9">
    <location>
        <begin position="906"/>
        <end position="914"/>
    </location>
</feature>
<feature type="helix" evidence="9">
    <location>
        <begin position="918"/>
        <end position="941"/>
    </location>
</feature>
<feature type="helix" evidence="9">
    <location>
        <begin position="949"/>
        <end position="951"/>
    </location>
</feature>
<feature type="strand" evidence="9">
    <location>
        <begin position="952"/>
        <end position="955"/>
    </location>
</feature>
<feature type="strand" evidence="9">
    <location>
        <begin position="960"/>
        <end position="962"/>
    </location>
</feature>
<feature type="turn" evidence="12">
    <location>
        <begin position="966"/>
        <end position="968"/>
    </location>
</feature>
<feature type="helix" evidence="9">
    <location>
        <begin position="989"/>
        <end position="994"/>
    </location>
</feature>
<feature type="strand" evidence="10">
    <location>
        <begin position="998"/>
        <end position="1001"/>
    </location>
</feature>
<feature type="helix" evidence="9">
    <location>
        <begin position="1004"/>
        <end position="1021"/>
    </location>
</feature>
<feature type="helix" evidence="9">
    <location>
        <begin position="1024"/>
        <end position="1037"/>
    </location>
</feature>
<feature type="strand" evidence="11">
    <location>
        <begin position="1039"/>
        <end position="1041"/>
    </location>
</feature>
<feature type="helix" evidence="9">
    <location>
        <begin position="1045"/>
        <end position="1054"/>
    </location>
</feature>
<feature type="turn" evidence="9">
    <location>
        <begin position="1055"/>
        <end position="1058"/>
    </location>
</feature>
<feature type="helix" evidence="9">
    <location>
        <begin position="1061"/>
        <end position="1078"/>
    </location>
</feature>
<feature type="helix" evidence="9">
    <location>
        <begin position="1081"/>
        <end position="1090"/>
    </location>
</feature>
<sequence length="1102" mass="126658">MELENYEQPVVLREDNRRRRRRMKPRSTAASLSSMELIPIEFVLPTSQRNTKTPETALLHVAGHGNVEQMKAQVWLRALETSVSADFYHRLGPDHFLLLYQKKGQWYEIYDKYQVVQTLDCLRYWKVLHRSPGQIHVVQRHAPSEETLAFQRQLNALIGYDVTDVSNVHDDELEFTRRRLVTPRMAEVAGRDPKLYAMHPWVTSKPLPEYLLKKITNNCVFIVIHRSTTSQTIKVSADDTPGTILQSFFTKMAKKKSLMDIPESQNERDFVLRVCGRDEYLVGETPIKNFQWVRQCLKNGEEIHLVLDTPPDPALDEVRKEEWPLVDDCTGVTGYHEQLTIHGKDHESVFTVSLWDCDRKFRVKIRGIDIPVLPRTADLTVFVEANIQYGQQVLCQRRTSPKPFTEEVLWNVWLEFSIKIKDLPKGALLNLQIYCGKAPALSGKTSAEMPSPESKGKAQLLYYVNLLLIDHRFLLRHGEYVLHMWQLSGKGEDQGSFNADKLTSRTNPDKENSMSISILLDNYCHPIALPKHRPTPDPEGDRVRAEMPNQLRKQLEAIIATDPLNPLTAEDKELLWHFRYESLKDPKAYPKLFSSVKWGQQEIVAKTYQLLAKREVWDQSALDVGLTMQLLDCNFSDENVRAIAVQKLESLEDDDVLHYLLQLVQAVKFEPYHDSALARFLLKRGLRNKRIGHFLFWFLRSEIAQSRHYQQRFAVILEAYLRGCGTAMLHDFTQQVQVIDMLQKVTIDIKSLSAEKYDVSSQVISQLKQKLENLQNLNLPQSFRVPYDPGLKAGALVIEKCKVMASKKKPLWLEFKCADPTALSNETIGIIFKHGDDLRQDMLILQILRIMESIWETESLDLCLLPYGCISTGDKIGMIEIVKDATTIAKIQQSTVGNTGAFKDEVLSHWLKEKCPIEEKFQAAVERFVYSCAGYCVATFVLGIGDRHNDNIMISETGNLFHIDFGHILGNYKSFLGINKERVPFVLTPDFLFVMGTSGKKTSLHFQKFQDVCVKAYLALRHHTNLLIILFSMMLMTGMPQLTSKEDIEYIRDALTVGKSEEDAKKYFLDQIEVCRDKGWTVQFNWFLHLVLGIKQGEKHSA</sequence>
<evidence type="ECO:0000250" key="1">
    <source>
        <dbReference type="UniProtKB" id="P48736"/>
    </source>
</evidence>
<evidence type="ECO:0000250" key="2">
    <source>
        <dbReference type="UniProtKB" id="Q9JHG7"/>
    </source>
</evidence>
<evidence type="ECO:0000255" key="3">
    <source>
        <dbReference type="PROSITE-ProRule" id="PRU00269"/>
    </source>
</evidence>
<evidence type="ECO:0000255" key="4">
    <source>
        <dbReference type="PROSITE-ProRule" id="PRU00877"/>
    </source>
</evidence>
<evidence type="ECO:0000255" key="5">
    <source>
        <dbReference type="PROSITE-ProRule" id="PRU00878"/>
    </source>
</evidence>
<evidence type="ECO:0000255" key="6">
    <source>
        <dbReference type="PROSITE-ProRule" id="PRU00879"/>
    </source>
</evidence>
<evidence type="ECO:0000255" key="7">
    <source>
        <dbReference type="PROSITE-ProRule" id="PRU00880"/>
    </source>
</evidence>
<evidence type="ECO:0000269" key="8">
    <source>
    </source>
</evidence>
<evidence type="ECO:0007829" key="9">
    <source>
        <dbReference type="PDB" id="1E7U"/>
    </source>
</evidence>
<evidence type="ECO:0007829" key="10">
    <source>
        <dbReference type="PDB" id="1E7V"/>
    </source>
</evidence>
<evidence type="ECO:0007829" key="11">
    <source>
        <dbReference type="PDB" id="1E8X"/>
    </source>
</evidence>
<evidence type="ECO:0007829" key="12">
    <source>
        <dbReference type="PDB" id="8SO9"/>
    </source>
</evidence>
<evidence type="ECO:0007829" key="13">
    <source>
        <dbReference type="PDB" id="8SOA"/>
    </source>
</evidence>
<evidence type="ECO:0007829" key="14">
    <source>
        <dbReference type="PDB" id="8SOC"/>
    </source>
</evidence>
<evidence type="ECO:0007829" key="15">
    <source>
        <dbReference type="PDB" id="8SOD"/>
    </source>
</evidence>